<proteinExistence type="inferred from homology"/>
<evidence type="ECO:0000255" key="1">
    <source>
        <dbReference type="HAMAP-Rule" id="MF_01622"/>
    </source>
</evidence>
<evidence type="ECO:0000305" key="2"/>
<gene>
    <name evidence="1" type="primary">selU</name>
    <name type="ordered locus">Bd2570</name>
</gene>
<protein>
    <recommendedName>
        <fullName evidence="1">tRNA 2-selenouridine synthase</fullName>
        <ecNumber evidence="1">2.9.1.3</ecNumber>
    </recommendedName>
</protein>
<name>SELU_BDEBA</name>
<feature type="chain" id="PRO_0000210856" description="tRNA 2-selenouridine synthase">
    <location>
        <begin position="1"/>
        <end position="379"/>
    </location>
</feature>
<feature type="domain" description="Rhodanese" evidence="1">
    <location>
        <begin position="15"/>
        <end position="138"/>
    </location>
</feature>
<feature type="active site" description="S-selanylcysteine intermediate" evidence="1">
    <location>
        <position position="98"/>
    </location>
</feature>
<sequence>MSLKNIKPDQLKNLFQQNIPLMDVRAPVEFSQGSIPGAVNLPVMNDDERAQVGTVYKNQGNEAAVKLGHELVSGLVKEQRVAAWKSFVQAHPEAVFYCFRGGQRSRISQAWLKEAGVERPLLVGGFKAARNYLIKQIEEFSVRQELISVSGPTGSGKTHFLRGLKGCPVIDLEALARHRGSAFGNWEVPQPTQVDYENNLAREILLLEDKIHGKIKPLVEDESRLIGRISQPATFFIRLRSSPVIWIDEPLPVRVDNVFDDYILNSSIGKSLEAAPRCAEENDILRAQALQLFARYRQSLLAIQRKLGGLRAQEVMADLEKAELAYLNHAELSGNKVWIEKLLQYYYDPMYLGSLERRHVTVLFKGTRFEAEKFVHSLT</sequence>
<organism>
    <name type="scientific">Bdellovibrio bacteriovorus (strain ATCC 15356 / DSM 50701 / NCIMB 9529 / HD100)</name>
    <dbReference type="NCBI Taxonomy" id="264462"/>
    <lineage>
        <taxon>Bacteria</taxon>
        <taxon>Pseudomonadati</taxon>
        <taxon>Bdellovibrionota</taxon>
        <taxon>Bdellovibrionia</taxon>
        <taxon>Bdellovibrionales</taxon>
        <taxon>Pseudobdellovibrionaceae</taxon>
        <taxon>Bdellovibrio</taxon>
    </lineage>
</organism>
<reference key="1">
    <citation type="journal article" date="2004" name="Science">
        <title>A predator unmasked: life cycle of Bdellovibrio bacteriovorus from a genomic perspective.</title>
        <authorList>
            <person name="Rendulic S."/>
            <person name="Jagtap P."/>
            <person name="Rosinus A."/>
            <person name="Eppinger M."/>
            <person name="Baar C."/>
            <person name="Lanz C."/>
            <person name="Keller H."/>
            <person name="Lambert C."/>
            <person name="Evans K.J."/>
            <person name="Goesmann A."/>
            <person name="Meyer F."/>
            <person name="Sockett R.E."/>
            <person name="Schuster S.C."/>
        </authorList>
    </citation>
    <scope>NUCLEOTIDE SEQUENCE [LARGE SCALE GENOMIC DNA]</scope>
    <source>
        <strain>ATCC 15356 / DSM 50701 / NCIMB 9529 / HD100</strain>
    </source>
</reference>
<keyword id="KW-1185">Reference proteome</keyword>
<keyword id="KW-0711">Selenium</keyword>
<keyword id="KW-0808">Transferase</keyword>
<dbReference type="EC" id="2.9.1.3" evidence="1"/>
<dbReference type="EMBL" id="BX842653">
    <property type="protein sequence ID" value="CAE80366.1"/>
    <property type="status" value="ALT_INIT"/>
    <property type="molecule type" value="Genomic_DNA"/>
</dbReference>
<dbReference type="RefSeq" id="WP_041583583.1">
    <property type="nucleotide sequence ID" value="NC_005363.1"/>
</dbReference>
<dbReference type="SMR" id="Q6MK43"/>
<dbReference type="STRING" id="264462.Bd2570"/>
<dbReference type="GeneID" id="93013470"/>
<dbReference type="KEGG" id="bba:Bd2570"/>
<dbReference type="eggNOG" id="COG2603">
    <property type="taxonomic scope" value="Bacteria"/>
</dbReference>
<dbReference type="HOGENOM" id="CLU_043456_1_0_7"/>
<dbReference type="Proteomes" id="UP000008080">
    <property type="component" value="Chromosome"/>
</dbReference>
<dbReference type="GO" id="GO:0043828">
    <property type="term" value="F:tRNA 2-selenouridine synthase activity"/>
    <property type="evidence" value="ECO:0007669"/>
    <property type="project" value="UniProtKB-EC"/>
</dbReference>
<dbReference type="GO" id="GO:0002098">
    <property type="term" value="P:tRNA wobble uridine modification"/>
    <property type="evidence" value="ECO:0007669"/>
    <property type="project" value="InterPro"/>
</dbReference>
<dbReference type="Gene3D" id="3.40.250.10">
    <property type="entry name" value="Rhodanese-like domain"/>
    <property type="match status" value="1"/>
</dbReference>
<dbReference type="HAMAP" id="MF_01622">
    <property type="entry name" value="tRNA_sel_U_synth"/>
    <property type="match status" value="1"/>
</dbReference>
<dbReference type="InterPro" id="IPR027417">
    <property type="entry name" value="P-loop_NTPase"/>
</dbReference>
<dbReference type="InterPro" id="IPR001763">
    <property type="entry name" value="Rhodanese-like_dom"/>
</dbReference>
<dbReference type="InterPro" id="IPR036873">
    <property type="entry name" value="Rhodanese-like_dom_sf"/>
</dbReference>
<dbReference type="InterPro" id="IPR017582">
    <property type="entry name" value="SelU"/>
</dbReference>
<dbReference type="NCBIfam" id="NF008751">
    <property type="entry name" value="PRK11784.1-3"/>
    <property type="match status" value="1"/>
</dbReference>
<dbReference type="NCBIfam" id="TIGR03167">
    <property type="entry name" value="tRNA_sel_U_synt"/>
    <property type="match status" value="1"/>
</dbReference>
<dbReference type="PANTHER" id="PTHR30401">
    <property type="entry name" value="TRNA 2-SELENOURIDINE SYNTHASE"/>
    <property type="match status" value="1"/>
</dbReference>
<dbReference type="PANTHER" id="PTHR30401:SF0">
    <property type="entry name" value="TRNA 2-SELENOURIDINE SYNTHASE"/>
    <property type="match status" value="1"/>
</dbReference>
<dbReference type="Pfam" id="PF00581">
    <property type="entry name" value="Rhodanese"/>
    <property type="match status" value="1"/>
</dbReference>
<dbReference type="SMART" id="SM00450">
    <property type="entry name" value="RHOD"/>
    <property type="match status" value="1"/>
</dbReference>
<dbReference type="SUPFAM" id="SSF52540">
    <property type="entry name" value="P-loop containing nucleoside triphosphate hydrolases"/>
    <property type="match status" value="1"/>
</dbReference>
<dbReference type="SUPFAM" id="SSF52821">
    <property type="entry name" value="Rhodanese/Cell cycle control phosphatase"/>
    <property type="match status" value="1"/>
</dbReference>
<dbReference type="PROSITE" id="PS50206">
    <property type="entry name" value="RHODANESE_3"/>
    <property type="match status" value="1"/>
</dbReference>
<accession>Q6MK43</accession>
<comment type="function">
    <text evidence="1">Involved in the post-transcriptional modification of the uridine at the wobble position (U34) of tRNA(Lys), tRNA(Glu) and tRNA(Gln). Catalyzes the conversion of 2-thiouridine (S2U-RNA) to 2-selenouridine (Se2U-RNA). Acts in a two-step process involving geranylation of 2-thiouridine (S2U) to S-geranyl-2-thiouridine (geS2U) and subsequent selenation of the latter derivative to 2-selenouridine (Se2U) in the tRNA chain.</text>
</comment>
<comment type="catalytic activity">
    <reaction evidence="1">
        <text>5-methylaminomethyl-2-thiouridine(34) in tRNA + selenophosphate + (2E)-geranyl diphosphate + H2O + H(+) = 5-methylaminomethyl-2-selenouridine(34) in tRNA + (2E)-thiogeraniol + phosphate + diphosphate</text>
        <dbReference type="Rhea" id="RHEA:42716"/>
        <dbReference type="Rhea" id="RHEA-COMP:10195"/>
        <dbReference type="Rhea" id="RHEA-COMP:10196"/>
        <dbReference type="ChEBI" id="CHEBI:15377"/>
        <dbReference type="ChEBI" id="CHEBI:15378"/>
        <dbReference type="ChEBI" id="CHEBI:16144"/>
        <dbReference type="ChEBI" id="CHEBI:33019"/>
        <dbReference type="ChEBI" id="CHEBI:43474"/>
        <dbReference type="ChEBI" id="CHEBI:58057"/>
        <dbReference type="ChEBI" id="CHEBI:74455"/>
        <dbReference type="ChEBI" id="CHEBI:82743"/>
        <dbReference type="ChEBI" id="CHEBI:143703"/>
        <dbReference type="EC" id="2.9.1.3"/>
    </reaction>
    <physiologicalReaction direction="left-to-right" evidence="1">
        <dbReference type="Rhea" id="RHEA:42717"/>
    </physiologicalReaction>
</comment>
<comment type="catalytic activity">
    <reaction evidence="1">
        <text>5-methylaminomethyl-2-thiouridine(34) in tRNA + (2E)-geranyl diphosphate = 5-methylaminomethyl-S-(2E)-geranyl-thiouridine(34) in tRNA + diphosphate</text>
        <dbReference type="Rhea" id="RHEA:14085"/>
        <dbReference type="Rhea" id="RHEA-COMP:10195"/>
        <dbReference type="Rhea" id="RHEA-COMP:14654"/>
        <dbReference type="ChEBI" id="CHEBI:33019"/>
        <dbReference type="ChEBI" id="CHEBI:58057"/>
        <dbReference type="ChEBI" id="CHEBI:74455"/>
        <dbReference type="ChEBI" id="CHEBI:140632"/>
    </reaction>
    <physiologicalReaction direction="left-to-right" evidence="1">
        <dbReference type="Rhea" id="RHEA:14086"/>
    </physiologicalReaction>
</comment>
<comment type="catalytic activity">
    <reaction evidence="1">
        <text>5-methylaminomethyl-S-(2E)-geranyl-thiouridine(34) in tRNA + selenophosphate + H(+) = 5-methylaminomethyl-2-(Se-phospho)selenouridine(34) in tRNA + (2E)-thiogeraniol</text>
        <dbReference type="Rhea" id="RHEA:60172"/>
        <dbReference type="Rhea" id="RHEA-COMP:14654"/>
        <dbReference type="Rhea" id="RHEA-COMP:15523"/>
        <dbReference type="ChEBI" id="CHEBI:15378"/>
        <dbReference type="ChEBI" id="CHEBI:16144"/>
        <dbReference type="ChEBI" id="CHEBI:140632"/>
        <dbReference type="ChEBI" id="CHEBI:143702"/>
        <dbReference type="ChEBI" id="CHEBI:143703"/>
    </reaction>
    <physiologicalReaction direction="left-to-right" evidence="1">
        <dbReference type="Rhea" id="RHEA:60173"/>
    </physiologicalReaction>
</comment>
<comment type="catalytic activity">
    <reaction evidence="1">
        <text>5-methylaminomethyl-2-(Se-phospho)selenouridine(34) in tRNA + H2O = 5-methylaminomethyl-2-selenouridine(34) in tRNA + phosphate</text>
        <dbReference type="Rhea" id="RHEA:60176"/>
        <dbReference type="Rhea" id="RHEA-COMP:10196"/>
        <dbReference type="Rhea" id="RHEA-COMP:15523"/>
        <dbReference type="ChEBI" id="CHEBI:15377"/>
        <dbReference type="ChEBI" id="CHEBI:43474"/>
        <dbReference type="ChEBI" id="CHEBI:82743"/>
        <dbReference type="ChEBI" id="CHEBI:143702"/>
    </reaction>
    <physiologicalReaction direction="left-to-right" evidence="1">
        <dbReference type="Rhea" id="RHEA:60177"/>
    </physiologicalReaction>
</comment>
<comment type="subunit">
    <text evidence="1">Monomer.</text>
</comment>
<comment type="similarity">
    <text evidence="1">Belongs to the SelU family.</text>
</comment>
<comment type="sequence caution" evidence="2">
    <conflict type="erroneous initiation">
        <sequence resource="EMBL-CDS" id="CAE80366"/>
    </conflict>
</comment>